<accession>A6GZS1</accession>
<feature type="chain" id="PRO_0000417712" description="CRISPR-associated endoribonuclease Cas2">
    <location>
        <begin position="1"/>
        <end position="115"/>
    </location>
</feature>
<feature type="binding site" evidence="1">
    <location>
        <position position="22"/>
    </location>
    <ligand>
        <name>Mg(2+)</name>
        <dbReference type="ChEBI" id="CHEBI:18420"/>
        <note>catalytic</note>
    </ligand>
</feature>
<dbReference type="EC" id="3.1.-.-" evidence="1"/>
<dbReference type="EMBL" id="AM398681">
    <property type="protein sequence ID" value="CAL43594.1"/>
    <property type="molecule type" value="Genomic_DNA"/>
</dbReference>
<dbReference type="RefSeq" id="WP_011963639.1">
    <property type="nucleotide sequence ID" value="NC_009613.3"/>
</dbReference>
<dbReference type="RefSeq" id="YP_001296403.1">
    <property type="nucleotide sequence ID" value="NC_009613.3"/>
</dbReference>
<dbReference type="SMR" id="A6GZS1"/>
<dbReference type="STRING" id="402612.FP1526"/>
<dbReference type="EnsemblBacteria" id="CAL43594">
    <property type="protein sequence ID" value="CAL43594"/>
    <property type="gene ID" value="FP1526"/>
</dbReference>
<dbReference type="GeneID" id="66552288"/>
<dbReference type="KEGG" id="fps:FP1526"/>
<dbReference type="PATRIC" id="fig|402612.5.peg.1535"/>
<dbReference type="eggNOG" id="COG3512">
    <property type="taxonomic scope" value="Bacteria"/>
</dbReference>
<dbReference type="HOGENOM" id="CLU_150500_0_0_10"/>
<dbReference type="OrthoDB" id="9791737at2"/>
<dbReference type="Proteomes" id="UP000006394">
    <property type="component" value="Chromosome"/>
</dbReference>
<dbReference type="GO" id="GO:0046872">
    <property type="term" value="F:metal ion binding"/>
    <property type="evidence" value="ECO:0007669"/>
    <property type="project" value="UniProtKB-UniRule"/>
</dbReference>
<dbReference type="GO" id="GO:0004521">
    <property type="term" value="F:RNA endonuclease activity"/>
    <property type="evidence" value="ECO:0007669"/>
    <property type="project" value="InterPro"/>
</dbReference>
<dbReference type="GO" id="GO:0051607">
    <property type="term" value="P:defense response to virus"/>
    <property type="evidence" value="ECO:0007669"/>
    <property type="project" value="UniProtKB-UniRule"/>
</dbReference>
<dbReference type="GO" id="GO:0043571">
    <property type="term" value="P:maintenance of CRISPR repeat elements"/>
    <property type="evidence" value="ECO:0007669"/>
    <property type="project" value="UniProtKB-UniRule"/>
</dbReference>
<dbReference type="HAMAP" id="MF_01471">
    <property type="entry name" value="Cas2"/>
    <property type="match status" value="1"/>
</dbReference>
<dbReference type="InterPro" id="IPR021127">
    <property type="entry name" value="CRISPR_associated_Cas2"/>
</dbReference>
<dbReference type="InterPro" id="IPR019199">
    <property type="entry name" value="Virulence_VapD/CRISPR_Cas2"/>
</dbReference>
<dbReference type="NCBIfam" id="TIGR01573">
    <property type="entry name" value="cas2"/>
    <property type="match status" value="1"/>
</dbReference>
<dbReference type="Pfam" id="PF09827">
    <property type="entry name" value="CRISPR_Cas2"/>
    <property type="match status" value="1"/>
</dbReference>
<dbReference type="SUPFAM" id="SSF143430">
    <property type="entry name" value="TTP0101/SSO1404-like"/>
    <property type="match status" value="1"/>
</dbReference>
<reference key="1">
    <citation type="journal article" date="2007" name="Nat. Biotechnol.">
        <title>Complete genome sequence of the fish pathogen Flavobacterium psychrophilum.</title>
        <authorList>
            <person name="Duchaud E."/>
            <person name="Boussaha M."/>
            <person name="Loux V."/>
            <person name="Bernardet J.-F."/>
            <person name="Michel C."/>
            <person name="Kerouault B."/>
            <person name="Mondot S."/>
            <person name="Nicolas P."/>
            <person name="Bossy R."/>
            <person name="Caron C."/>
            <person name="Bessieres P."/>
            <person name="Gibrat J.-F."/>
            <person name="Claverol S."/>
            <person name="Dumetz F."/>
            <person name="Le Henaff M."/>
            <person name="Benmansour A."/>
        </authorList>
    </citation>
    <scope>NUCLEOTIDE SEQUENCE [LARGE SCALE GENOMIC DNA]</scope>
    <source>
        <strain>ATCC 49511 / DSM 21280 / CIP 103535 / JIP02/86</strain>
    </source>
</reference>
<proteinExistence type="inferred from homology"/>
<comment type="function">
    <text evidence="1">CRISPR (clustered regularly interspaced short palindromic repeat), is an adaptive immune system that provides protection against mobile genetic elements (viruses, transposable elements and conjugative plasmids). CRISPR clusters contain sequences complementary to antecedent mobile elements and target invading nucleic acids. CRISPR clusters are transcribed and processed into CRISPR RNA (crRNA). Functions as a ssRNA-specific endoribonuclease. Involved in the integration of spacer DNA into the CRISPR cassette.</text>
</comment>
<comment type="cofactor">
    <cofactor evidence="1">
        <name>Mg(2+)</name>
        <dbReference type="ChEBI" id="CHEBI:18420"/>
    </cofactor>
</comment>
<comment type="subunit">
    <text evidence="1">Homodimer, forms a heterotetramer with a Cas1 homodimer.</text>
</comment>
<comment type="similarity">
    <text evidence="1">Belongs to the CRISPR-associated endoribonuclease Cas2 protein family.</text>
</comment>
<protein>
    <recommendedName>
        <fullName evidence="1">CRISPR-associated endoribonuclease Cas2</fullName>
        <ecNumber evidence="1">3.1.-.-</ecNumber>
    </recommendedName>
</protein>
<organism>
    <name type="scientific">Flavobacterium psychrophilum (strain ATCC 49511 / DSM 21280 / CIP 103535 / JIP02/86)</name>
    <dbReference type="NCBI Taxonomy" id="402612"/>
    <lineage>
        <taxon>Bacteria</taxon>
        <taxon>Pseudomonadati</taxon>
        <taxon>Bacteroidota</taxon>
        <taxon>Flavobacteriia</taxon>
        <taxon>Flavobacteriales</taxon>
        <taxon>Flavobacteriaceae</taxon>
        <taxon>Flavobacterium</taxon>
    </lineage>
</organism>
<sequence>MYDEHYTRLNQYRSLWILVFFDLPTETRKERKIASEFRKKLLDDGFSMFQFSIYIRFCASRENAEVHTKRIRNSLPEHGKIGVMQITDKQFGMMELFYGKKPVETDKPSQQLELF</sequence>
<keyword id="KW-0051">Antiviral defense</keyword>
<keyword id="KW-0255">Endonuclease</keyword>
<keyword id="KW-0378">Hydrolase</keyword>
<keyword id="KW-0460">Magnesium</keyword>
<keyword id="KW-0479">Metal-binding</keyword>
<keyword id="KW-0540">Nuclease</keyword>
<keyword id="KW-1185">Reference proteome</keyword>
<name>CAS2_FLAPJ</name>
<evidence type="ECO:0000255" key="1">
    <source>
        <dbReference type="HAMAP-Rule" id="MF_01471"/>
    </source>
</evidence>
<gene>
    <name evidence="1" type="primary">cas2</name>
    <name type="ordered locus">FP1526</name>
</gene>